<sequence>MNKQNARHRRGLKAKALIRKTGRSRLVVYRSGVHIYSQIVKSDQLGDKVLVASSTIDKELRSSLTGKSKVEQASLVGQLLGKRAKAAGITQVAFDRAGYKYHGRVKALAEGAREAGLDF</sequence>
<reference key="1">
    <citation type="journal article" date="2004" name="Nat. Genet.">
        <title>Evidence in the Legionella pneumophila genome for exploitation of host cell functions and high genome plasticity.</title>
        <authorList>
            <person name="Cazalet C."/>
            <person name="Rusniok C."/>
            <person name="Brueggemann H."/>
            <person name="Zidane N."/>
            <person name="Magnier A."/>
            <person name="Ma L."/>
            <person name="Tichit M."/>
            <person name="Jarraud S."/>
            <person name="Bouchier C."/>
            <person name="Vandenesch F."/>
            <person name="Kunst F."/>
            <person name="Etienne J."/>
            <person name="Glaser P."/>
            <person name="Buchrieser C."/>
        </authorList>
    </citation>
    <scope>NUCLEOTIDE SEQUENCE [LARGE SCALE GENOMIC DNA]</scope>
    <source>
        <strain>Paris</strain>
    </source>
</reference>
<evidence type="ECO:0000255" key="1">
    <source>
        <dbReference type="HAMAP-Rule" id="MF_01337"/>
    </source>
</evidence>
<evidence type="ECO:0000305" key="2"/>
<accession>Q5X843</accession>
<dbReference type="EMBL" id="CR628336">
    <property type="protein sequence ID" value="CAH11558.1"/>
    <property type="molecule type" value="Genomic_DNA"/>
</dbReference>
<dbReference type="RefSeq" id="WP_010946094.1">
    <property type="nucleotide sequence ID" value="NC_006368.1"/>
</dbReference>
<dbReference type="SMR" id="Q5X843"/>
<dbReference type="GeneID" id="57034348"/>
<dbReference type="KEGG" id="lpp:lpp0410"/>
<dbReference type="LegioList" id="lpp0410"/>
<dbReference type="HOGENOM" id="CLU_098841_0_1_6"/>
<dbReference type="GO" id="GO:0022625">
    <property type="term" value="C:cytosolic large ribosomal subunit"/>
    <property type="evidence" value="ECO:0007669"/>
    <property type="project" value="TreeGrafter"/>
</dbReference>
<dbReference type="GO" id="GO:0008097">
    <property type="term" value="F:5S rRNA binding"/>
    <property type="evidence" value="ECO:0007669"/>
    <property type="project" value="TreeGrafter"/>
</dbReference>
<dbReference type="GO" id="GO:0003735">
    <property type="term" value="F:structural constituent of ribosome"/>
    <property type="evidence" value="ECO:0007669"/>
    <property type="project" value="InterPro"/>
</dbReference>
<dbReference type="GO" id="GO:0006412">
    <property type="term" value="P:translation"/>
    <property type="evidence" value="ECO:0007669"/>
    <property type="project" value="UniProtKB-UniRule"/>
</dbReference>
<dbReference type="CDD" id="cd00432">
    <property type="entry name" value="Ribosomal_L18_L5e"/>
    <property type="match status" value="1"/>
</dbReference>
<dbReference type="FunFam" id="3.30.420.100:FF:000001">
    <property type="entry name" value="50S ribosomal protein L18"/>
    <property type="match status" value="1"/>
</dbReference>
<dbReference type="Gene3D" id="3.30.420.100">
    <property type="match status" value="1"/>
</dbReference>
<dbReference type="HAMAP" id="MF_01337_B">
    <property type="entry name" value="Ribosomal_uL18_B"/>
    <property type="match status" value="1"/>
</dbReference>
<dbReference type="InterPro" id="IPR004389">
    <property type="entry name" value="Ribosomal_uL18_bac-type"/>
</dbReference>
<dbReference type="InterPro" id="IPR005484">
    <property type="entry name" value="Ribosomal_uL18_bac/euk"/>
</dbReference>
<dbReference type="NCBIfam" id="TIGR00060">
    <property type="entry name" value="L18_bact"/>
    <property type="match status" value="1"/>
</dbReference>
<dbReference type="PANTHER" id="PTHR12899">
    <property type="entry name" value="39S RIBOSOMAL PROTEIN L18, MITOCHONDRIAL"/>
    <property type="match status" value="1"/>
</dbReference>
<dbReference type="PANTHER" id="PTHR12899:SF3">
    <property type="entry name" value="LARGE RIBOSOMAL SUBUNIT PROTEIN UL18M"/>
    <property type="match status" value="1"/>
</dbReference>
<dbReference type="Pfam" id="PF00861">
    <property type="entry name" value="Ribosomal_L18p"/>
    <property type="match status" value="1"/>
</dbReference>
<dbReference type="SUPFAM" id="SSF53137">
    <property type="entry name" value="Translational machinery components"/>
    <property type="match status" value="1"/>
</dbReference>
<gene>
    <name evidence="1" type="primary">rplR</name>
    <name type="ordered locus">lpp0410</name>
</gene>
<comment type="function">
    <text evidence="1">This is one of the proteins that bind and probably mediate the attachment of the 5S RNA into the large ribosomal subunit, where it forms part of the central protuberance.</text>
</comment>
<comment type="subunit">
    <text evidence="1">Part of the 50S ribosomal subunit; part of the 5S rRNA/L5/L18/L25 subcomplex. Contacts the 5S and 23S rRNAs.</text>
</comment>
<comment type="similarity">
    <text evidence="1">Belongs to the universal ribosomal protein uL18 family.</text>
</comment>
<feature type="chain" id="PRO_0000131281" description="Large ribosomal subunit protein uL18">
    <location>
        <begin position="1"/>
        <end position="119"/>
    </location>
</feature>
<organism>
    <name type="scientific">Legionella pneumophila (strain Paris)</name>
    <dbReference type="NCBI Taxonomy" id="297246"/>
    <lineage>
        <taxon>Bacteria</taxon>
        <taxon>Pseudomonadati</taxon>
        <taxon>Pseudomonadota</taxon>
        <taxon>Gammaproteobacteria</taxon>
        <taxon>Legionellales</taxon>
        <taxon>Legionellaceae</taxon>
        <taxon>Legionella</taxon>
    </lineage>
</organism>
<keyword id="KW-0687">Ribonucleoprotein</keyword>
<keyword id="KW-0689">Ribosomal protein</keyword>
<keyword id="KW-0694">RNA-binding</keyword>
<keyword id="KW-0699">rRNA-binding</keyword>
<proteinExistence type="inferred from homology"/>
<name>RL18_LEGPA</name>
<protein>
    <recommendedName>
        <fullName evidence="1">Large ribosomal subunit protein uL18</fullName>
    </recommendedName>
    <alternativeName>
        <fullName evidence="2">50S ribosomal protein L18</fullName>
    </alternativeName>
</protein>